<reference key="1">
    <citation type="journal article" date="2001" name="Science">
        <title>The genome of the natural genetic engineer Agrobacterium tumefaciens C58.</title>
        <authorList>
            <person name="Wood D.W."/>
            <person name="Setubal J.C."/>
            <person name="Kaul R."/>
            <person name="Monks D.E."/>
            <person name="Kitajima J.P."/>
            <person name="Okura V.K."/>
            <person name="Zhou Y."/>
            <person name="Chen L."/>
            <person name="Wood G.E."/>
            <person name="Almeida N.F. Jr."/>
            <person name="Woo L."/>
            <person name="Chen Y."/>
            <person name="Paulsen I.T."/>
            <person name="Eisen J.A."/>
            <person name="Karp P.D."/>
            <person name="Bovee D. Sr."/>
            <person name="Chapman P."/>
            <person name="Clendenning J."/>
            <person name="Deatherage G."/>
            <person name="Gillet W."/>
            <person name="Grant C."/>
            <person name="Kutyavin T."/>
            <person name="Levy R."/>
            <person name="Li M.-J."/>
            <person name="McClelland E."/>
            <person name="Palmieri A."/>
            <person name="Raymond C."/>
            <person name="Rouse G."/>
            <person name="Saenphimmachak C."/>
            <person name="Wu Z."/>
            <person name="Romero P."/>
            <person name="Gordon D."/>
            <person name="Zhang S."/>
            <person name="Yoo H."/>
            <person name="Tao Y."/>
            <person name="Biddle P."/>
            <person name="Jung M."/>
            <person name="Krespan W."/>
            <person name="Perry M."/>
            <person name="Gordon-Kamm B."/>
            <person name="Liao L."/>
            <person name="Kim S."/>
            <person name="Hendrick C."/>
            <person name="Zhao Z.-Y."/>
            <person name="Dolan M."/>
            <person name="Chumley F."/>
            <person name="Tingey S.V."/>
            <person name="Tomb J.-F."/>
            <person name="Gordon M.P."/>
            <person name="Olson M.V."/>
            <person name="Nester E.W."/>
        </authorList>
    </citation>
    <scope>NUCLEOTIDE SEQUENCE [LARGE SCALE GENOMIC DNA]</scope>
    <source>
        <strain>C58 / ATCC 33970</strain>
    </source>
</reference>
<reference key="2">
    <citation type="journal article" date="2001" name="Science">
        <title>Genome sequence of the plant pathogen and biotechnology agent Agrobacterium tumefaciens C58.</title>
        <authorList>
            <person name="Goodner B."/>
            <person name="Hinkle G."/>
            <person name="Gattung S."/>
            <person name="Miller N."/>
            <person name="Blanchard M."/>
            <person name="Qurollo B."/>
            <person name="Goldman B.S."/>
            <person name="Cao Y."/>
            <person name="Askenazi M."/>
            <person name="Halling C."/>
            <person name="Mullin L."/>
            <person name="Houmiel K."/>
            <person name="Gordon J."/>
            <person name="Vaudin M."/>
            <person name="Iartchouk O."/>
            <person name="Epp A."/>
            <person name="Liu F."/>
            <person name="Wollam C."/>
            <person name="Allinger M."/>
            <person name="Doughty D."/>
            <person name="Scott C."/>
            <person name="Lappas C."/>
            <person name="Markelz B."/>
            <person name="Flanagan C."/>
            <person name="Crowell C."/>
            <person name="Gurson J."/>
            <person name="Lomo C."/>
            <person name="Sear C."/>
            <person name="Strub G."/>
            <person name="Cielo C."/>
            <person name="Slater S."/>
        </authorList>
    </citation>
    <scope>NUCLEOTIDE SEQUENCE [LARGE SCALE GENOMIC DNA]</scope>
    <source>
        <strain>C58 / ATCC 33970</strain>
    </source>
</reference>
<organism>
    <name type="scientific">Agrobacterium fabrum (strain C58 / ATCC 33970)</name>
    <name type="common">Agrobacterium tumefaciens (strain C58)</name>
    <dbReference type="NCBI Taxonomy" id="176299"/>
    <lineage>
        <taxon>Bacteria</taxon>
        <taxon>Pseudomonadati</taxon>
        <taxon>Pseudomonadota</taxon>
        <taxon>Alphaproteobacteria</taxon>
        <taxon>Hyphomicrobiales</taxon>
        <taxon>Rhizobiaceae</taxon>
        <taxon>Rhizobium/Agrobacterium group</taxon>
        <taxon>Agrobacterium</taxon>
        <taxon>Agrobacterium tumefaciens complex</taxon>
    </lineage>
</organism>
<comment type="function">
    <text evidence="1">Catalyzes the reversible interconversion of serine and glycine with tetrahydrofolate (THF) serving as the one-carbon carrier. This reaction serves as the major source of one-carbon groups required for the biosynthesis of purines, thymidylate, methionine, and other important biomolecules. Also exhibits THF-independent aldolase activity toward beta-hydroxyamino acids, producing glycine and aldehydes, via a retro-aldol mechanism.</text>
</comment>
<comment type="catalytic activity">
    <reaction evidence="1">
        <text>(6R)-5,10-methylene-5,6,7,8-tetrahydrofolate + glycine + H2O = (6S)-5,6,7,8-tetrahydrofolate + L-serine</text>
        <dbReference type="Rhea" id="RHEA:15481"/>
        <dbReference type="ChEBI" id="CHEBI:15377"/>
        <dbReference type="ChEBI" id="CHEBI:15636"/>
        <dbReference type="ChEBI" id="CHEBI:33384"/>
        <dbReference type="ChEBI" id="CHEBI:57305"/>
        <dbReference type="ChEBI" id="CHEBI:57453"/>
        <dbReference type="EC" id="2.1.2.1"/>
    </reaction>
</comment>
<comment type="cofactor">
    <cofactor evidence="1">
        <name>pyridoxal 5'-phosphate</name>
        <dbReference type="ChEBI" id="CHEBI:597326"/>
    </cofactor>
</comment>
<comment type="pathway">
    <text evidence="1">One-carbon metabolism; tetrahydrofolate interconversion.</text>
</comment>
<comment type="pathway">
    <text evidence="1">Amino-acid biosynthesis; glycine biosynthesis; glycine from L-serine: step 1/1.</text>
</comment>
<comment type="subunit">
    <text evidence="1">Homodimer.</text>
</comment>
<comment type="subcellular location">
    <subcellularLocation>
        <location evidence="1">Cytoplasm</location>
    </subcellularLocation>
</comment>
<comment type="similarity">
    <text evidence="1">Belongs to the SHMT family.</text>
</comment>
<accession>Q8U7Y5</accession>
<name>GLYA2_AGRFC</name>
<keyword id="KW-0028">Amino-acid biosynthesis</keyword>
<keyword id="KW-0963">Cytoplasm</keyword>
<keyword id="KW-0554">One-carbon metabolism</keyword>
<keyword id="KW-0663">Pyridoxal phosphate</keyword>
<keyword id="KW-1185">Reference proteome</keyword>
<keyword id="KW-0808">Transferase</keyword>
<evidence type="ECO:0000255" key="1">
    <source>
        <dbReference type="HAMAP-Rule" id="MF_00051"/>
    </source>
</evidence>
<sequence length="422" mass="44776">MLNRLSHNTVSDTVIADAIAEELDRQKTQIELIASENIVSADVLAAQGSVLTNKYAEGYPGKRYYGGCEFVDKVEQVAIDRLKQLFGAEFANVQPHSGAQANQAVFLALLQPGDRIMGLSLAHGGHLTHGSPVTMSGKWFDVVSYEVDPETHLIDMEKVREKALETKPKLIVAGASAYPRQIDFAGFREIADEVGAYLMVDMAHYAGLIAGGHYPNAVPHAHVTTSTTHKTLRGPRGGVILTNDADLAKKLNSAVFPGNQGGPLMHVIAAKAVAFGEALRPEFSDYAGQVIANAQALAKVLIQGGLGIVSGGTDSHMVLVDLRPKGVTGKIAEIALERAGLTCNKNSIPNDPEKPFVTSGIRLGSSAGTTRGFGVLEFEKIGALILRVIDALATNAEGDSAVEAEVREEVAALCEAFPIYVS</sequence>
<protein>
    <recommendedName>
        <fullName evidence="1">Serine hydroxymethyltransferase 2</fullName>
        <shortName evidence="1">SHMT 2</shortName>
        <shortName evidence="1">Serine methylase 2</shortName>
        <ecNumber evidence="1">2.1.2.1</ecNumber>
    </recommendedName>
</protein>
<gene>
    <name evidence="1" type="primary">glyA2</name>
    <name type="ordered locus">Atu4314</name>
    <name type="ORF">AGR_L_1099</name>
</gene>
<proteinExistence type="inferred from homology"/>
<feature type="chain" id="PRO_0000113520" description="Serine hydroxymethyltransferase 2">
    <location>
        <begin position="1"/>
        <end position="422"/>
    </location>
</feature>
<feature type="binding site" evidence="1">
    <location>
        <position position="121"/>
    </location>
    <ligand>
        <name>(6S)-5,6,7,8-tetrahydrofolate</name>
        <dbReference type="ChEBI" id="CHEBI:57453"/>
    </ligand>
</feature>
<feature type="binding site" evidence="1">
    <location>
        <begin position="125"/>
        <end position="127"/>
    </location>
    <ligand>
        <name>(6S)-5,6,7,8-tetrahydrofolate</name>
        <dbReference type="ChEBI" id="CHEBI:57453"/>
    </ligand>
</feature>
<feature type="site" description="Plays an important role in substrate specificity" evidence="1">
    <location>
        <position position="229"/>
    </location>
</feature>
<feature type="modified residue" description="N6-(pyridoxal phosphate)lysine" evidence="1">
    <location>
        <position position="230"/>
    </location>
</feature>
<dbReference type="EC" id="2.1.2.1" evidence="1"/>
<dbReference type="EMBL" id="AE007870">
    <property type="protein sequence ID" value="AAK89125.1"/>
    <property type="molecule type" value="Genomic_DNA"/>
</dbReference>
<dbReference type="PIR" id="AF3086">
    <property type="entry name" value="AF3086"/>
</dbReference>
<dbReference type="PIR" id="C98200">
    <property type="entry name" value="C98200"/>
</dbReference>
<dbReference type="RefSeq" id="NP_356340.1">
    <property type="nucleotide sequence ID" value="NC_003063.2"/>
</dbReference>
<dbReference type="RefSeq" id="WP_010973741.1">
    <property type="nucleotide sequence ID" value="NC_003063.2"/>
</dbReference>
<dbReference type="SMR" id="Q8U7Y5"/>
<dbReference type="STRING" id="176299.Atu4314"/>
<dbReference type="SwissPalm" id="Q8U7Y5"/>
<dbReference type="EnsemblBacteria" id="AAK89125">
    <property type="protein sequence ID" value="AAK89125"/>
    <property type="gene ID" value="Atu4314"/>
</dbReference>
<dbReference type="GeneID" id="1136188"/>
<dbReference type="KEGG" id="atu:Atu4314"/>
<dbReference type="PATRIC" id="fig|176299.10.peg.4124"/>
<dbReference type="eggNOG" id="COG0112">
    <property type="taxonomic scope" value="Bacteria"/>
</dbReference>
<dbReference type="HOGENOM" id="CLU_022477_2_1_5"/>
<dbReference type="OrthoDB" id="9803846at2"/>
<dbReference type="PhylomeDB" id="Q8U7Y5"/>
<dbReference type="BioCyc" id="AGRO:ATU4314-MONOMER"/>
<dbReference type="UniPathway" id="UPA00193"/>
<dbReference type="UniPathway" id="UPA00288">
    <property type="reaction ID" value="UER01023"/>
</dbReference>
<dbReference type="Proteomes" id="UP000000813">
    <property type="component" value="Chromosome linear"/>
</dbReference>
<dbReference type="GO" id="GO:0005829">
    <property type="term" value="C:cytosol"/>
    <property type="evidence" value="ECO:0007669"/>
    <property type="project" value="TreeGrafter"/>
</dbReference>
<dbReference type="GO" id="GO:0004372">
    <property type="term" value="F:glycine hydroxymethyltransferase activity"/>
    <property type="evidence" value="ECO:0007669"/>
    <property type="project" value="UniProtKB-UniRule"/>
</dbReference>
<dbReference type="GO" id="GO:0030170">
    <property type="term" value="F:pyridoxal phosphate binding"/>
    <property type="evidence" value="ECO:0007669"/>
    <property type="project" value="UniProtKB-UniRule"/>
</dbReference>
<dbReference type="GO" id="GO:0019264">
    <property type="term" value="P:glycine biosynthetic process from serine"/>
    <property type="evidence" value="ECO:0007669"/>
    <property type="project" value="UniProtKB-UniRule"/>
</dbReference>
<dbReference type="GO" id="GO:0035999">
    <property type="term" value="P:tetrahydrofolate interconversion"/>
    <property type="evidence" value="ECO:0007669"/>
    <property type="project" value="UniProtKB-UniRule"/>
</dbReference>
<dbReference type="CDD" id="cd00378">
    <property type="entry name" value="SHMT"/>
    <property type="match status" value="1"/>
</dbReference>
<dbReference type="FunFam" id="3.40.640.10:FF:000001">
    <property type="entry name" value="Serine hydroxymethyltransferase"/>
    <property type="match status" value="1"/>
</dbReference>
<dbReference type="Gene3D" id="3.90.1150.10">
    <property type="entry name" value="Aspartate Aminotransferase, domain 1"/>
    <property type="match status" value="1"/>
</dbReference>
<dbReference type="Gene3D" id="3.40.640.10">
    <property type="entry name" value="Type I PLP-dependent aspartate aminotransferase-like (Major domain)"/>
    <property type="match status" value="1"/>
</dbReference>
<dbReference type="HAMAP" id="MF_00051">
    <property type="entry name" value="SHMT"/>
    <property type="match status" value="1"/>
</dbReference>
<dbReference type="InterPro" id="IPR015424">
    <property type="entry name" value="PyrdxlP-dep_Trfase"/>
</dbReference>
<dbReference type="InterPro" id="IPR015421">
    <property type="entry name" value="PyrdxlP-dep_Trfase_major"/>
</dbReference>
<dbReference type="InterPro" id="IPR015422">
    <property type="entry name" value="PyrdxlP-dep_Trfase_small"/>
</dbReference>
<dbReference type="InterPro" id="IPR001085">
    <property type="entry name" value="Ser_HO-MeTrfase"/>
</dbReference>
<dbReference type="InterPro" id="IPR049943">
    <property type="entry name" value="Ser_HO-MeTrfase-like"/>
</dbReference>
<dbReference type="InterPro" id="IPR019798">
    <property type="entry name" value="Ser_HO-MeTrfase_PLP_BS"/>
</dbReference>
<dbReference type="InterPro" id="IPR039429">
    <property type="entry name" value="SHMT-like_dom"/>
</dbReference>
<dbReference type="NCBIfam" id="NF000586">
    <property type="entry name" value="PRK00011.1"/>
    <property type="match status" value="1"/>
</dbReference>
<dbReference type="PANTHER" id="PTHR11680">
    <property type="entry name" value="SERINE HYDROXYMETHYLTRANSFERASE"/>
    <property type="match status" value="1"/>
</dbReference>
<dbReference type="PANTHER" id="PTHR11680:SF35">
    <property type="entry name" value="SERINE HYDROXYMETHYLTRANSFERASE 1"/>
    <property type="match status" value="1"/>
</dbReference>
<dbReference type="Pfam" id="PF00464">
    <property type="entry name" value="SHMT"/>
    <property type="match status" value="1"/>
</dbReference>
<dbReference type="PIRSF" id="PIRSF000412">
    <property type="entry name" value="SHMT"/>
    <property type="match status" value="1"/>
</dbReference>
<dbReference type="SUPFAM" id="SSF53383">
    <property type="entry name" value="PLP-dependent transferases"/>
    <property type="match status" value="1"/>
</dbReference>
<dbReference type="PROSITE" id="PS00096">
    <property type="entry name" value="SHMT"/>
    <property type="match status" value="1"/>
</dbReference>